<name>SYC_MOOTA</name>
<keyword id="KW-0030">Aminoacyl-tRNA synthetase</keyword>
<keyword id="KW-0067">ATP-binding</keyword>
<keyword id="KW-0963">Cytoplasm</keyword>
<keyword id="KW-0436">Ligase</keyword>
<keyword id="KW-0479">Metal-binding</keyword>
<keyword id="KW-0547">Nucleotide-binding</keyword>
<keyword id="KW-0648">Protein biosynthesis</keyword>
<keyword id="KW-0862">Zinc</keyword>
<sequence>MYLYNTLTGRKEEFTPVEPGRVRMYVCGPTTYNYIHLGNARPMVVFDTLRRYLEYRNYDVLYVQNFTDIDDKVINRAREEHQAPLVIAERYIEEFFKDADALNVKRATLYPRVSQHIDAIIAAIATLVERGFAYVADGDVYFEVEKFPAYGRLSKRTPGEMRAGARVEVNTSKRNPLDFALWKAACPGEPSWESPWGPGRPGWHIECSTMALKYLGPGFDIHGGGADLIFPHHENEIAQAEAQTGCTFARFWLHNGFITVNQEKMSKSKGNFFLVRDILKRFRPLAVRLYLLATHYRSPIDFDDAGLLAAERGLERLENTRRLLGEARCQLTGTGAETTVPARTSALAGRAEELRQEFISAMDDDFNTARALAALYDLAREINSYLNGTTTIDPAALRTAAITFEQLGGEVLGLFGQARQQVDDELLSGLMDLILQVRQEARQRRDWATADTIRDRLKELGIVLEDTPRGPRWKRS</sequence>
<gene>
    <name evidence="1" type="primary">cysS</name>
    <name type="ordered locus">Moth_2484</name>
</gene>
<feature type="chain" id="PRO_0000240922" description="Cysteine--tRNA ligase">
    <location>
        <begin position="1"/>
        <end position="476"/>
    </location>
</feature>
<feature type="short sequence motif" description="'HIGH' region">
    <location>
        <begin position="29"/>
        <end position="39"/>
    </location>
</feature>
<feature type="short sequence motif" description="'KMSKS' region">
    <location>
        <begin position="264"/>
        <end position="268"/>
    </location>
</feature>
<feature type="binding site" evidence="1">
    <location>
        <position position="27"/>
    </location>
    <ligand>
        <name>Zn(2+)</name>
        <dbReference type="ChEBI" id="CHEBI:29105"/>
    </ligand>
</feature>
<feature type="binding site" evidence="1">
    <location>
        <position position="207"/>
    </location>
    <ligand>
        <name>Zn(2+)</name>
        <dbReference type="ChEBI" id="CHEBI:29105"/>
    </ligand>
</feature>
<feature type="binding site" evidence="1">
    <location>
        <position position="232"/>
    </location>
    <ligand>
        <name>Zn(2+)</name>
        <dbReference type="ChEBI" id="CHEBI:29105"/>
    </ligand>
</feature>
<feature type="binding site" evidence="1">
    <location>
        <position position="236"/>
    </location>
    <ligand>
        <name>Zn(2+)</name>
        <dbReference type="ChEBI" id="CHEBI:29105"/>
    </ligand>
</feature>
<feature type="binding site" evidence="1">
    <location>
        <position position="267"/>
    </location>
    <ligand>
        <name>ATP</name>
        <dbReference type="ChEBI" id="CHEBI:30616"/>
    </ligand>
</feature>
<dbReference type="EC" id="6.1.1.16" evidence="1"/>
<dbReference type="EMBL" id="CP000232">
    <property type="protein sequence ID" value="ABC20766.1"/>
    <property type="molecule type" value="Genomic_DNA"/>
</dbReference>
<dbReference type="RefSeq" id="YP_431309.1">
    <property type="nucleotide sequence ID" value="NC_007644.1"/>
</dbReference>
<dbReference type="SMR" id="Q2RFM3"/>
<dbReference type="STRING" id="264732.Moth_2484"/>
<dbReference type="EnsemblBacteria" id="ABC20766">
    <property type="protein sequence ID" value="ABC20766"/>
    <property type="gene ID" value="Moth_2484"/>
</dbReference>
<dbReference type="KEGG" id="mta:Moth_2484"/>
<dbReference type="PATRIC" id="fig|264732.11.peg.2704"/>
<dbReference type="eggNOG" id="COG0215">
    <property type="taxonomic scope" value="Bacteria"/>
</dbReference>
<dbReference type="HOGENOM" id="CLU_013528_0_1_9"/>
<dbReference type="OrthoDB" id="9815130at2"/>
<dbReference type="GO" id="GO:0005829">
    <property type="term" value="C:cytosol"/>
    <property type="evidence" value="ECO:0007669"/>
    <property type="project" value="TreeGrafter"/>
</dbReference>
<dbReference type="GO" id="GO:0005524">
    <property type="term" value="F:ATP binding"/>
    <property type="evidence" value="ECO:0007669"/>
    <property type="project" value="UniProtKB-UniRule"/>
</dbReference>
<dbReference type="GO" id="GO:0004817">
    <property type="term" value="F:cysteine-tRNA ligase activity"/>
    <property type="evidence" value="ECO:0007669"/>
    <property type="project" value="UniProtKB-UniRule"/>
</dbReference>
<dbReference type="GO" id="GO:0008270">
    <property type="term" value="F:zinc ion binding"/>
    <property type="evidence" value="ECO:0007669"/>
    <property type="project" value="UniProtKB-UniRule"/>
</dbReference>
<dbReference type="GO" id="GO:0006423">
    <property type="term" value="P:cysteinyl-tRNA aminoacylation"/>
    <property type="evidence" value="ECO:0007669"/>
    <property type="project" value="UniProtKB-UniRule"/>
</dbReference>
<dbReference type="CDD" id="cd00672">
    <property type="entry name" value="CysRS_core"/>
    <property type="match status" value="1"/>
</dbReference>
<dbReference type="FunFam" id="3.40.50.620:FF:000009">
    <property type="entry name" value="Cysteine--tRNA ligase"/>
    <property type="match status" value="1"/>
</dbReference>
<dbReference type="Gene3D" id="1.20.120.1910">
    <property type="entry name" value="Cysteine-tRNA ligase, C-terminal anti-codon recognition domain"/>
    <property type="match status" value="1"/>
</dbReference>
<dbReference type="Gene3D" id="3.40.50.620">
    <property type="entry name" value="HUPs"/>
    <property type="match status" value="1"/>
</dbReference>
<dbReference type="HAMAP" id="MF_00041">
    <property type="entry name" value="Cys_tRNA_synth"/>
    <property type="match status" value="1"/>
</dbReference>
<dbReference type="InterPro" id="IPR015803">
    <property type="entry name" value="Cys-tRNA-ligase"/>
</dbReference>
<dbReference type="InterPro" id="IPR015273">
    <property type="entry name" value="Cys-tRNA-synt_Ia_DALR"/>
</dbReference>
<dbReference type="InterPro" id="IPR024909">
    <property type="entry name" value="Cys-tRNA/MSH_ligase"/>
</dbReference>
<dbReference type="InterPro" id="IPR056411">
    <property type="entry name" value="CysS_C"/>
</dbReference>
<dbReference type="InterPro" id="IPR014729">
    <property type="entry name" value="Rossmann-like_a/b/a_fold"/>
</dbReference>
<dbReference type="InterPro" id="IPR032678">
    <property type="entry name" value="tRNA-synt_1_cat_dom"/>
</dbReference>
<dbReference type="InterPro" id="IPR009080">
    <property type="entry name" value="tRNAsynth_Ia_anticodon-bd"/>
</dbReference>
<dbReference type="NCBIfam" id="TIGR00435">
    <property type="entry name" value="cysS"/>
    <property type="match status" value="1"/>
</dbReference>
<dbReference type="PANTHER" id="PTHR10890:SF3">
    <property type="entry name" value="CYSTEINE--TRNA LIGASE, CYTOPLASMIC"/>
    <property type="match status" value="1"/>
</dbReference>
<dbReference type="PANTHER" id="PTHR10890">
    <property type="entry name" value="CYSTEINYL-TRNA SYNTHETASE"/>
    <property type="match status" value="1"/>
</dbReference>
<dbReference type="Pfam" id="PF23493">
    <property type="entry name" value="CysS_C"/>
    <property type="match status" value="1"/>
</dbReference>
<dbReference type="Pfam" id="PF09190">
    <property type="entry name" value="DALR_2"/>
    <property type="match status" value="1"/>
</dbReference>
<dbReference type="Pfam" id="PF01406">
    <property type="entry name" value="tRNA-synt_1e"/>
    <property type="match status" value="1"/>
</dbReference>
<dbReference type="PRINTS" id="PR00983">
    <property type="entry name" value="TRNASYNTHCYS"/>
</dbReference>
<dbReference type="SMART" id="SM00840">
    <property type="entry name" value="DALR_2"/>
    <property type="match status" value="1"/>
</dbReference>
<dbReference type="SUPFAM" id="SSF47323">
    <property type="entry name" value="Anticodon-binding domain of a subclass of class I aminoacyl-tRNA synthetases"/>
    <property type="match status" value="1"/>
</dbReference>
<dbReference type="SUPFAM" id="SSF52374">
    <property type="entry name" value="Nucleotidylyl transferase"/>
    <property type="match status" value="1"/>
</dbReference>
<protein>
    <recommendedName>
        <fullName evidence="1">Cysteine--tRNA ligase</fullName>
        <ecNumber evidence="1">6.1.1.16</ecNumber>
    </recommendedName>
    <alternativeName>
        <fullName evidence="1">Cysteinyl-tRNA synthetase</fullName>
        <shortName evidence="1">CysRS</shortName>
    </alternativeName>
</protein>
<proteinExistence type="inferred from homology"/>
<comment type="catalytic activity">
    <reaction evidence="1">
        <text>tRNA(Cys) + L-cysteine + ATP = L-cysteinyl-tRNA(Cys) + AMP + diphosphate</text>
        <dbReference type="Rhea" id="RHEA:17773"/>
        <dbReference type="Rhea" id="RHEA-COMP:9661"/>
        <dbReference type="Rhea" id="RHEA-COMP:9679"/>
        <dbReference type="ChEBI" id="CHEBI:30616"/>
        <dbReference type="ChEBI" id="CHEBI:33019"/>
        <dbReference type="ChEBI" id="CHEBI:35235"/>
        <dbReference type="ChEBI" id="CHEBI:78442"/>
        <dbReference type="ChEBI" id="CHEBI:78517"/>
        <dbReference type="ChEBI" id="CHEBI:456215"/>
        <dbReference type="EC" id="6.1.1.16"/>
    </reaction>
</comment>
<comment type="cofactor">
    <cofactor evidence="1">
        <name>Zn(2+)</name>
        <dbReference type="ChEBI" id="CHEBI:29105"/>
    </cofactor>
    <text evidence="1">Binds 1 zinc ion per subunit.</text>
</comment>
<comment type="subunit">
    <text evidence="1">Monomer.</text>
</comment>
<comment type="subcellular location">
    <subcellularLocation>
        <location evidence="1">Cytoplasm</location>
    </subcellularLocation>
</comment>
<comment type="similarity">
    <text evidence="1">Belongs to the class-I aminoacyl-tRNA synthetase family.</text>
</comment>
<accession>Q2RFM3</accession>
<evidence type="ECO:0000255" key="1">
    <source>
        <dbReference type="HAMAP-Rule" id="MF_00041"/>
    </source>
</evidence>
<organism>
    <name type="scientific">Moorella thermoacetica (strain ATCC 39073 / JCM 9320)</name>
    <dbReference type="NCBI Taxonomy" id="264732"/>
    <lineage>
        <taxon>Bacteria</taxon>
        <taxon>Bacillati</taxon>
        <taxon>Bacillota</taxon>
        <taxon>Clostridia</taxon>
        <taxon>Moorellales</taxon>
        <taxon>Moorellaceae</taxon>
        <taxon>Moorella</taxon>
    </lineage>
</organism>
<reference key="1">
    <citation type="journal article" date="2008" name="Environ. Microbiol.">
        <title>The complete genome sequence of Moorella thermoacetica (f. Clostridium thermoaceticum).</title>
        <authorList>
            <person name="Pierce E."/>
            <person name="Xie G."/>
            <person name="Barabote R.D."/>
            <person name="Saunders E."/>
            <person name="Han C.S."/>
            <person name="Detter J.C."/>
            <person name="Richardson P."/>
            <person name="Brettin T.S."/>
            <person name="Das A."/>
            <person name="Ljungdahl L.G."/>
            <person name="Ragsdale S.W."/>
        </authorList>
    </citation>
    <scope>NUCLEOTIDE SEQUENCE [LARGE SCALE GENOMIC DNA]</scope>
    <source>
        <strain>ATCC 39073 / JCM 9320</strain>
    </source>
</reference>